<organism>
    <name type="scientific">Encephalitozoon cuniculi (strain GB-M1)</name>
    <name type="common">Microsporidian parasite</name>
    <dbReference type="NCBI Taxonomy" id="284813"/>
    <lineage>
        <taxon>Eukaryota</taxon>
        <taxon>Fungi</taxon>
        <taxon>Fungi incertae sedis</taxon>
        <taxon>Microsporidia</taxon>
        <taxon>Unikaryonidae</taxon>
        <taxon>Encephalitozoon</taxon>
    </lineage>
</organism>
<feature type="chain" id="PRO_0000388403" description="Probable histidine--tRNA ligase, cytoplasmic">
    <location>
        <begin position="1"/>
        <end position="435"/>
    </location>
</feature>
<name>SYHC_ENCCU</name>
<protein>
    <recommendedName>
        <fullName>Probable histidine--tRNA ligase, cytoplasmic</fullName>
        <ecNumber>6.1.1.21</ecNumber>
    </recommendedName>
    <alternativeName>
        <fullName>Histidyl-tRNA synthetase</fullName>
        <shortName>HisRS</shortName>
    </alternativeName>
</protein>
<sequence>MTSLKTPKGTMDESPRQCFLHEEIIERIRRVFVLYGAVPISTPTFEMKSILTNKYGEDTKLIYDLKDQGGEICALRYDLTVPFARYLASNKIRRMKRYQIGRVYRRDQPSIARGRLREFVQADFDIAGECIQMMADAEVVSCVDRILSMFGIGEYRIKVNDRRILTSILEVVGVSCESYGTVCSTIDKIEKMSWEDIGRELVLKGLSEEQVRTTKKYMTMGGKEDVLGLLKADPVYGIERCKAAVHDMEELFRLCRILGCSGSLVMDISLARGLDYYTGMILEAEYVGKSVGSVIGGGRYDNLTENLGERCVSTPCVGFSVGVSRIFSLLYEEYDKESSTMVYVGASGGLFLDERLSVLRILQDANICSETFYTRRSSFESQQKYVAKKKIPFIVVVGESEIAAGSVQVINALTRKKEIVKVEQMVSYLLDPENQ</sequence>
<reference key="1">
    <citation type="journal article" date="2001" name="Nature">
        <title>Genome sequence and gene compaction of the eukaryote parasite Encephalitozoon cuniculi.</title>
        <authorList>
            <person name="Katinka M.D."/>
            <person name="Duprat S."/>
            <person name="Cornillot E."/>
            <person name="Metenier G."/>
            <person name="Thomarat F."/>
            <person name="Prensier G."/>
            <person name="Barbe V."/>
            <person name="Peyretaillade E."/>
            <person name="Brottier P."/>
            <person name="Wincker P."/>
            <person name="Delbac F."/>
            <person name="El Alaoui H."/>
            <person name="Peyret P."/>
            <person name="Saurin W."/>
            <person name="Gouy M."/>
            <person name="Weissenbach J."/>
            <person name="Vivares C.P."/>
        </authorList>
    </citation>
    <scope>NUCLEOTIDE SEQUENCE [LARGE SCALE GENOMIC DNA]</scope>
    <source>
        <strain>GB-M1</strain>
    </source>
</reference>
<keyword id="KW-0030">Aminoacyl-tRNA synthetase</keyword>
<keyword id="KW-0067">ATP-binding</keyword>
<keyword id="KW-0963">Cytoplasm</keyword>
<keyword id="KW-0436">Ligase</keyword>
<keyword id="KW-0547">Nucleotide-binding</keyword>
<keyword id="KW-0648">Protein biosynthesis</keyword>
<keyword id="KW-1185">Reference proteome</keyword>
<evidence type="ECO:0000250" key="1"/>
<evidence type="ECO:0000305" key="2"/>
<gene>
    <name type="ordered locus">ECU06_0620</name>
</gene>
<dbReference type="EC" id="6.1.1.21"/>
<dbReference type="EMBL" id="AL590446">
    <property type="protein sequence ID" value="CAD25422.1"/>
    <property type="molecule type" value="Genomic_DNA"/>
</dbReference>
<dbReference type="RefSeq" id="NP_585818.1">
    <property type="nucleotide sequence ID" value="NM_001041440.1"/>
</dbReference>
<dbReference type="SMR" id="Q8SRR3"/>
<dbReference type="FunCoup" id="Q8SRR3">
    <property type="interactions" value="177"/>
</dbReference>
<dbReference type="STRING" id="284813.Q8SRR3"/>
<dbReference type="GeneID" id="859242"/>
<dbReference type="KEGG" id="ecu:ECU06_0620"/>
<dbReference type="VEuPathDB" id="MicrosporidiaDB:ECU06_0620"/>
<dbReference type="HOGENOM" id="CLU_025113_4_2_1"/>
<dbReference type="InParanoid" id="Q8SRR3"/>
<dbReference type="OMA" id="YQIQKVW"/>
<dbReference type="OrthoDB" id="1906957at2759"/>
<dbReference type="Proteomes" id="UP000000819">
    <property type="component" value="Chromosome VI"/>
</dbReference>
<dbReference type="GO" id="GO:0005829">
    <property type="term" value="C:cytosol"/>
    <property type="evidence" value="ECO:0007669"/>
    <property type="project" value="TreeGrafter"/>
</dbReference>
<dbReference type="GO" id="GO:0005739">
    <property type="term" value="C:mitochondrion"/>
    <property type="evidence" value="ECO:0007669"/>
    <property type="project" value="TreeGrafter"/>
</dbReference>
<dbReference type="GO" id="GO:0005524">
    <property type="term" value="F:ATP binding"/>
    <property type="evidence" value="ECO:0007669"/>
    <property type="project" value="UniProtKB-KW"/>
</dbReference>
<dbReference type="GO" id="GO:0004821">
    <property type="term" value="F:histidine-tRNA ligase activity"/>
    <property type="evidence" value="ECO:0007669"/>
    <property type="project" value="UniProtKB-EC"/>
</dbReference>
<dbReference type="GO" id="GO:0003723">
    <property type="term" value="F:RNA binding"/>
    <property type="evidence" value="ECO:0007669"/>
    <property type="project" value="TreeGrafter"/>
</dbReference>
<dbReference type="GO" id="GO:0006427">
    <property type="term" value="P:histidyl-tRNA aminoacylation"/>
    <property type="evidence" value="ECO:0007669"/>
    <property type="project" value="InterPro"/>
</dbReference>
<dbReference type="GO" id="GO:0032543">
    <property type="term" value="P:mitochondrial translation"/>
    <property type="evidence" value="ECO:0007669"/>
    <property type="project" value="TreeGrafter"/>
</dbReference>
<dbReference type="CDD" id="cd00773">
    <property type="entry name" value="HisRS-like_core"/>
    <property type="match status" value="1"/>
</dbReference>
<dbReference type="CDD" id="cd00859">
    <property type="entry name" value="HisRS_anticodon"/>
    <property type="match status" value="1"/>
</dbReference>
<dbReference type="Gene3D" id="3.40.50.800">
    <property type="entry name" value="Anticodon-binding domain"/>
    <property type="match status" value="1"/>
</dbReference>
<dbReference type="Gene3D" id="3.30.930.10">
    <property type="entry name" value="Bira Bifunctional Protein, Domain 2"/>
    <property type="match status" value="1"/>
</dbReference>
<dbReference type="InterPro" id="IPR006195">
    <property type="entry name" value="aa-tRNA-synth_II"/>
</dbReference>
<dbReference type="InterPro" id="IPR045864">
    <property type="entry name" value="aa-tRNA-synth_II/BPL/LPL"/>
</dbReference>
<dbReference type="InterPro" id="IPR004154">
    <property type="entry name" value="Anticodon-bd"/>
</dbReference>
<dbReference type="InterPro" id="IPR036621">
    <property type="entry name" value="Anticodon-bd_dom_sf"/>
</dbReference>
<dbReference type="InterPro" id="IPR015807">
    <property type="entry name" value="His-tRNA-ligase"/>
</dbReference>
<dbReference type="InterPro" id="IPR041715">
    <property type="entry name" value="HisRS-like_core"/>
</dbReference>
<dbReference type="InterPro" id="IPR004516">
    <property type="entry name" value="HisRS/HisZ"/>
</dbReference>
<dbReference type="InterPro" id="IPR033656">
    <property type="entry name" value="HisRS_anticodon"/>
</dbReference>
<dbReference type="NCBIfam" id="TIGR00442">
    <property type="entry name" value="hisS"/>
    <property type="match status" value="1"/>
</dbReference>
<dbReference type="PANTHER" id="PTHR11476:SF7">
    <property type="entry name" value="HISTIDINE--TRNA LIGASE"/>
    <property type="match status" value="1"/>
</dbReference>
<dbReference type="PANTHER" id="PTHR11476">
    <property type="entry name" value="HISTIDYL-TRNA SYNTHETASE"/>
    <property type="match status" value="1"/>
</dbReference>
<dbReference type="Pfam" id="PF03129">
    <property type="entry name" value="HGTP_anticodon"/>
    <property type="match status" value="1"/>
</dbReference>
<dbReference type="Pfam" id="PF13393">
    <property type="entry name" value="tRNA-synt_His"/>
    <property type="match status" value="1"/>
</dbReference>
<dbReference type="PIRSF" id="PIRSF001549">
    <property type="entry name" value="His-tRNA_synth"/>
    <property type="match status" value="1"/>
</dbReference>
<dbReference type="SUPFAM" id="SSF52954">
    <property type="entry name" value="Class II aaRS ABD-related"/>
    <property type="match status" value="1"/>
</dbReference>
<dbReference type="SUPFAM" id="SSF55681">
    <property type="entry name" value="Class II aaRS and biotin synthetases"/>
    <property type="match status" value="1"/>
</dbReference>
<dbReference type="PROSITE" id="PS50862">
    <property type="entry name" value="AA_TRNA_LIGASE_II"/>
    <property type="match status" value="1"/>
</dbReference>
<accession>Q8SRR3</accession>
<comment type="catalytic activity">
    <reaction>
        <text>tRNA(His) + L-histidine + ATP = L-histidyl-tRNA(His) + AMP + diphosphate + H(+)</text>
        <dbReference type="Rhea" id="RHEA:17313"/>
        <dbReference type="Rhea" id="RHEA-COMP:9665"/>
        <dbReference type="Rhea" id="RHEA-COMP:9689"/>
        <dbReference type="ChEBI" id="CHEBI:15378"/>
        <dbReference type="ChEBI" id="CHEBI:30616"/>
        <dbReference type="ChEBI" id="CHEBI:33019"/>
        <dbReference type="ChEBI" id="CHEBI:57595"/>
        <dbReference type="ChEBI" id="CHEBI:78442"/>
        <dbReference type="ChEBI" id="CHEBI:78527"/>
        <dbReference type="ChEBI" id="CHEBI:456215"/>
        <dbReference type="EC" id="6.1.1.21"/>
    </reaction>
</comment>
<comment type="subcellular location">
    <subcellularLocation>
        <location evidence="1">Cytoplasm</location>
    </subcellularLocation>
</comment>
<comment type="similarity">
    <text evidence="2">Belongs to the class-II aminoacyl-tRNA synthetase family.</text>
</comment>
<proteinExistence type="inferred from homology"/>